<keyword id="KW-0240">DNA-directed RNA polymerase</keyword>
<keyword id="KW-0244">Early protein</keyword>
<keyword id="KW-1035">Host cytoplasm</keyword>
<keyword id="KW-0804">Transcription</keyword>
<keyword id="KW-1195">Viral transcription</keyword>
<keyword id="KW-0946">Virion</keyword>
<name>RPB3_ASFWA</name>
<protein>
    <recommendedName>
        <fullName evidence="2">DNA-directed RNA polymerase RPB3-11 homolog</fullName>
        <shortName evidence="3">RPB3-11 homolog</shortName>
    </recommendedName>
</protein>
<organismHost>
    <name type="scientific">Ornithodoros</name>
    <name type="common">relapsing fever ticks</name>
    <dbReference type="NCBI Taxonomy" id="6937"/>
</organismHost>
<organismHost>
    <name type="scientific">Phacochoerus aethiopicus</name>
    <name type="common">Warthog</name>
    <dbReference type="NCBI Taxonomy" id="85517"/>
</organismHost>
<organismHost>
    <name type="scientific">Phacochoerus africanus</name>
    <name type="common">Warthog</name>
    <dbReference type="NCBI Taxonomy" id="41426"/>
</organismHost>
<organismHost>
    <name type="scientific">Potamochoerus larvatus</name>
    <name type="common">Bushpig</name>
    <dbReference type="NCBI Taxonomy" id="273792"/>
</organismHost>
<organismHost>
    <name type="scientific">Sus scrofa</name>
    <name type="common">Pig</name>
    <dbReference type="NCBI Taxonomy" id="9823"/>
</organismHost>
<evidence type="ECO:0000250" key="1">
    <source>
        <dbReference type="UniProtKB" id="P19387"/>
    </source>
</evidence>
<evidence type="ECO:0000250" key="2">
    <source>
        <dbReference type="UniProtKB" id="Q65184"/>
    </source>
</evidence>
<evidence type="ECO:0000305" key="3"/>
<accession>P0C9E7</accession>
<dbReference type="EMBL" id="AY261366">
    <property type="status" value="NOT_ANNOTATED_CDS"/>
    <property type="molecule type" value="Genomic_DNA"/>
</dbReference>
<dbReference type="SMR" id="P0C9E7"/>
<dbReference type="Proteomes" id="UP000000858">
    <property type="component" value="Segment"/>
</dbReference>
<dbReference type="GO" id="GO:0000428">
    <property type="term" value="C:DNA-directed RNA polymerase complex"/>
    <property type="evidence" value="ECO:0007669"/>
    <property type="project" value="UniProtKB-KW"/>
</dbReference>
<dbReference type="GO" id="GO:0030430">
    <property type="term" value="C:host cell cytoplasm"/>
    <property type="evidence" value="ECO:0007669"/>
    <property type="project" value="UniProtKB-SubCell"/>
</dbReference>
<dbReference type="GO" id="GO:0044423">
    <property type="term" value="C:virion component"/>
    <property type="evidence" value="ECO:0007669"/>
    <property type="project" value="UniProtKB-KW"/>
</dbReference>
<dbReference type="GO" id="GO:0046983">
    <property type="term" value="F:protein dimerization activity"/>
    <property type="evidence" value="ECO:0007669"/>
    <property type="project" value="InterPro"/>
</dbReference>
<dbReference type="GO" id="GO:0006351">
    <property type="term" value="P:DNA-templated transcription"/>
    <property type="evidence" value="ECO:0007669"/>
    <property type="project" value="InterPro"/>
</dbReference>
<dbReference type="GO" id="GO:0019083">
    <property type="term" value="P:viral transcription"/>
    <property type="evidence" value="ECO:0007669"/>
    <property type="project" value="UniProtKB-KW"/>
</dbReference>
<dbReference type="Gene3D" id="2.170.120.12">
    <property type="entry name" value="DNA-directed RNA polymerase, insert domain"/>
    <property type="match status" value="1"/>
</dbReference>
<dbReference type="Gene3D" id="3.30.1360.10">
    <property type="entry name" value="RNA polymerase, RBP11-like subunit"/>
    <property type="match status" value="2"/>
</dbReference>
<dbReference type="InterPro" id="IPR036603">
    <property type="entry name" value="RBP11-like"/>
</dbReference>
<dbReference type="InterPro" id="IPR009025">
    <property type="entry name" value="RBP11-like_dimer"/>
</dbReference>
<dbReference type="InterPro" id="IPR036643">
    <property type="entry name" value="RNApol_insert_sf"/>
</dbReference>
<dbReference type="Pfam" id="PF13656">
    <property type="entry name" value="RNA_pol_L_2"/>
    <property type="match status" value="1"/>
</dbReference>
<dbReference type="SUPFAM" id="SSF56553">
    <property type="entry name" value="Insert subdomain of RNA polymerase alpha subunit"/>
    <property type="match status" value="1"/>
</dbReference>
<dbReference type="SUPFAM" id="SSF55257">
    <property type="entry name" value="RBP11-like subunits of RNA polymerase"/>
    <property type="match status" value="1"/>
</dbReference>
<sequence>MEKIFQNVEIKPFLIDFSNPFIKNAAKRLFQLEEQLPLVPVNVVMDFKGINRAAVHGLSRVLQDEIPNYMLDIKPGGYKIEDSTDLFMTEQFIRNRINFIPIYAKNETLVFALRSLNNSCEVKTIYSRDLIQVAGPKLKYPIFNPTFEIGFLQPGKSLIIEDIYIKKGIGRKHAAFNLAVKTHFSHLDIEQYPTDKKEYMALSGYKQSSMTSDPRHHRLGLCFPAVPLPHINQAVRTYLKNACRVIIGRIQSIQKIYENFEEPQPELVLFSMDEEKTKAIITIKDETHTIGNLLKTYIYEMIPDISFVGYQCVPHKQEMVLTIIHKASQEDLITLLEKSIQNIIQTFQILEKNVDELIA</sequence>
<reference key="1">
    <citation type="submission" date="2003-03" db="EMBL/GenBank/DDBJ databases">
        <title>African swine fever virus genomes.</title>
        <authorList>
            <person name="Kutish G.F."/>
            <person name="Rock D.L."/>
        </authorList>
    </citation>
    <scope>NUCLEOTIDE SEQUENCE [LARGE SCALE GENOMIC DNA]</scope>
</reference>
<gene>
    <name type="ordered locus">War-123</name>
</gene>
<feature type="chain" id="PRO_0000373167" description="DNA-directed RNA polymerase RPB3-11 homolog">
    <location>
        <begin position="1"/>
        <end position="359"/>
    </location>
</feature>
<organism>
    <name type="scientific">African swine fever virus (isolate Warthog/Namibia/Wart80/1980)</name>
    <name type="common">ASFV</name>
    <dbReference type="NCBI Taxonomy" id="561444"/>
    <lineage>
        <taxon>Viruses</taxon>
        <taxon>Varidnaviria</taxon>
        <taxon>Bamfordvirae</taxon>
        <taxon>Nucleocytoviricota</taxon>
        <taxon>Pokkesviricetes</taxon>
        <taxon>Asfuvirales</taxon>
        <taxon>Asfarviridae</taxon>
        <taxon>Asfivirus</taxon>
        <taxon>African swine fever virus</taxon>
    </lineage>
</organism>
<comment type="function">
    <text evidence="1">Component of the DNA-directed RNA polymerase (RNAP) that catalyzes the transcription in the cytoplasm of viral DNA into RNA using the four ribonucleoside triphosphates as substrates.</text>
</comment>
<comment type="subunit">
    <text evidence="2">Part of the viral DNA-directed RNA polymerase that consists of 8 polII-like subunits (RPB1, RPB2, RPB3, RPB5, RPB6, RPB7, RPB9, RPB10), a capping enzyme and a termination factor.</text>
</comment>
<comment type="subcellular location">
    <subcellularLocation>
        <location evidence="3">Host cytoplasm</location>
    </subcellularLocation>
    <subcellularLocation>
        <location evidence="2">Virion</location>
    </subcellularLocation>
    <text evidence="2">Found in association with viral nucleoid.</text>
</comment>
<comment type="induction">
    <text evidence="3">Expressed in the early phase of the viral replicative cycle.</text>
</comment>
<comment type="similarity">
    <text evidence="3">In the N-terminal section; belongs to the archaeal RpoD/eukaryotic RPB3 RNA polymerase subunit family.</text>
</comment>
<comment type="similarity">
    <text evidence="3">In the C-terminal section; belongs to the archaeal RpoL/eukaryotic RPB11/RPC19 RNA polymerase subunit family.</text>
</comment>
<proteinExistence type="inferred from homology"/>